<dbReference type="EC" id="2.8.4.3" evidence="1"/>
<dbReference type="EMBL" id="CP000750">
    <property type="protein sequence ID" value="ABS02987.1"/>
    <property type="molecule type" value="Genomic_DNA"/>
</dbReference>
<dbReference type="RefSeq" id="WP_011981874.1">
    <property type="nucleotide sequence ID" value="NC_009664.2"/>
</dbReference>
<dbReference type="SMR" id="A6W848"/>
<dbReference type="STRING" id="266940.Krad_1499"/>
<dbReference type="KEGG" id="kra:Krad_1499"/>
<dbReference type="eggNOG" id="COG0621">
    <property type="taxonomic scope" value="Bacteria"/>
</dbReference>
<dbReference type="HOGENOM" id="CLU_018697_2_2_11"/>
<dbReference type="OrthoDB" id="9805215at2"/>
<dbReference type="Proteomes" id="UP000001116">
    <property type="component" value="Chromosome"/>
</dbReference>
<dbReference type="GO" id="GO:0005829">
    <property type="term" value="C:cytosol"/>
    <property type="evidence" value="ECO:0007669"/>
    <property type="project" value="TreeGrafter"/>
</dbReference>
<dbReference type="GO" id="GO:0051539">
    <property type="term" value="F:4 iron, 4 sulfur cluster binding"/>
    <property type="evidence" value="ECO:0007669"/>
    <property type="project" value="UniProtKB-UniRule"/>
</dbReference>
<dbReference type="GO" id="GO:0046872">
    <property type="term" value="F:metal ion binding"/>
    <property type="evidence" value="ECO:0007669"/>
    <property type="project" value="UniProtKB-KW"/>
</dbReference>
<dbReference type="GO" id="GO:0035597">
    <property type="term" value="F:N6-isopentenyladenosine methylthiotransferase activity"/>
    <property type="evidence" value="ECO:0007669"/>
    <property type="project" value="TreeGrafter"/>
</dbReference>
<dbReference type="CDD" id="cd01335">
    <property type="entry name" value="Radical_SAM"/>
    <property type="match status" value="1"/>
</dbReference>
<dbReference type="FunFam" id="3.40.50.12160:FF:000003">
    <property type="entry name" value="CDK5 regulatory subunit-associated protein 1"/>
    <property type="match status" value="1"/>
</dbReference>
<dbReference type="FunFam" id="3.80.30.20:FF:000001">
    <property type="entry name" value="tRNA-2-methylthio-N(6)-dimethylallyladenosine synthase 2"/>
    <property type="match status" value="1"/>
</dbReference>
<dbReference type="Gene3D" id="3.40.50.12160">
    <property type="entry name" value="Methylthiotransferase, N-terminal domain"/>
    <property type="match status" value="1"/>
</dbReference>
<dbReference type="Gene3D" id="3.80.30.20">
    <property type="entry name" value="tm_1862 like domain"/>
    <property type="match status" value="1"/>
</dbReference>
<dbReference type="HAMAP" id="MF_01864">
    <property type="entry name" value="tRNA_metthiotr_MiaB"/>
    <property type="match status" value="1"/>
</dbReference>
<dbReference type="InterPro" id="IPR006638">
    <property type="entry name" value="Elp3/MiaA/NifB-like_rSAM"/>
</dbReference>
<dbReference type="InterPro" id="IPR005839">
    <property type="entry name" value="Methylthiotransferase"/>
</dbReference>
<dbReference type="InterPro" id="IPR020612">
    <property type="entry name" value="Methylthiotransferase_CS"/>
</dbReference>
<dbReference type="InterPro" id="IPR013848">
    <property type="entry name" value="Methylthiotransferase_N"/>
</dbReference>
<dbReference type="InterPro" id="IPR038135">
    <property type="entry name" value="Methylthiotransferase_N_sf"/>
</dbReference>
<dbReference type="InterPro" id="IPR006463">
    <property type="entry name" value="MiaB_methiolase"/>
</dbReference>
<dbReference type="InterPro" id="IPR007197">
    <property type="entry name" value="rSAM"/>
</dbReference>
<dbReference type="InterPro" id="IPR023404">
    <property type="entry name" value="rSAM_horseshoe"/>
</dbReference>
<dbReference type="InterPro" id="IPR002792">
    <property type="entry name" value="TRAM_dom"/>
</dbReference>
<dbReference type="NCBIfam" id="TIGR01574">
    <property type="entry name" value="miaB-methiolase"/>
    <property type="match status" value="1"/>
</dbReference>
<dbReference type="NCBIfam" id="TIGR00089">
    <property type="entry name" value="MiaB/RimO family radical SAM methylthiotransferase"/>
    <property type="match status" value="1"/>
</dbReference>
<dbReference type="PANTHER" id="PTHR43020">
    <property type="entry name" value="CDK5 REGULATORY SUBUNIT-ASSOCIATED PROTEIN 1"/>
    <property type="match status" value="1"/>
</dbReference>
<dbReference type="PANTHER" id="PTHR43020:SF2">
    <property type="entry name" value="MITOCHONDRIAL TRNA METHYLTHIOTRANSFERASE CDK5RAP1"/>
    <property type="match status" value="1"/>
</dbReference>
<dbReference type="Pfam" id="PF04055">
    <property type="entry name" value="Radical_SAM"/>
    <property type="match status" value="1"/>
</dbReference>
<dbReference type="Pfam" id="PF00919">
    <property type="entry name" value="UPF0004"/>
    <property type="match status" value="1"/>
</dbReference>
<dbReference type="SFLD" id="SFLDF00273">
    <property type="entry name" value="(dimethylallyl)adenosine_tRNA"/>
    <property type="match status" value="1"/>
</dbReference>
<dbReference type="SFLD" id="SFLDG01082">
    <property type="entry name" value="B12-binding_domain_containing"/>
    <property type="match status" value="1"/>
</dbReference>
<dbReference type="SFLD" id="SFLDG01061">
    <property type="entry name" value="methylthiotransferase"/>
    <property type="match status" value="1"/>
</dbReference>
<dbReference type="SMART" id="SM00729">
    <property type="entry name" value="Elp3"/>
    <property type="match status" value="1"/>
</dbReference>
<dbReference type="SUPFAM" id="SSF102114">
    <property type="entry name" value="Radical SAM enzymes"/>
    <property type="match status" value="1"/>
</dbReference>
<dbReference type="PROSITE" id="PS51449">
    <property type="entry name" value="MTTASE_N"/>
    <property type="match status" value="1"/>
</dbReference>
<dbReference type="PROSITE" id="PS01278">
    <property type="entry name" value="MTTASE_RADICAL"/>
    <property type="match status" value="1"/>
</dbReference>
<dbReference type="PROSITE" id="PS51918">
    <property type="entry name" value="RADICAL_SAM"/>
    <property type="match status" value="1"/>
</dbReference>
<dbReference type="PROSITE" id="PS50926">
    <property type="entry name" value="TRAM"/>
    <property type="match status" value="1"/>
</dbReference>
<name>MIAB_KINRD</name>
<sequence>MSTTTATPAGADDTVAAARTYQVRTFGCQMNVHDSERLSGLLEDAGYVRFDEAGRPEGSDAPVEPDVVVFNTCAVRENADNKLYGNLGHLAPVKERRPGMQIAVGGCLAQKDRGEIVRKAPWVDVVFGTHNVGSLPVLLERARHNAEAQVEILESLETFPSTLPTRRESPYAAWVSISVGCNNTCTFCIVPALRGKEKDRRPGDVLAEIEALVGEGVLEVTLLGQNVNTYGVEFGDKLAFGKLLRATGGIEGLERVRFTSPHPSSFTDDVVDAMAETPNVMPSLHMPLQSGSDRVLKAMRRSYRQSRFLGIIDRVRSSIPDAAITTDIIVGFPGETDEDFEQTLHVVEQARFSSAFTFQYSPRPGTPAATMGDQIPKRVVQERYERLTALQDRITYEDNQAQTGRTLEVLVAEGEGRKDAATRRLSGRAPDNRLVHFALPEGAQAPRPGDVATVTVTRGAPHYLEADDVSGFAVRRTRAGDAWEARQARPEPESTGPRPVGLGLPTLRRA</sequence>
<accession>A6W848</accession>
<comment type="function">
    <text evidence="1">Catalyzes the methylthiolation of N6-(dimethylallyl)adenosine (i(6)A), leading to the formation of 2-methylthio-N6-(dimethylallyl)adenosine (ms(2)i(6)A) at position 37 in tRNAs that read codons beginning with uridine.</text>
</comment>
<comment type="catalytic activity">
    <reaction evidence="1">
        <text>N(6)-dimethylallyladenosine(37) in tRNA + (sulfur carrier)-SH + AH2 + 2 S-adenosyl-L-methionine = 2-methylsulfanyl-N(6)-dimethylallyladenosine(37) in tRNA + (sulfur carrier)-H + 5'-deoxyadenosine + L-methionine + A + S-adenosyl-L-homocysteine + 2 H(+)</text>
        <dbReference type="Rhea" id="RHEA:37067"/>
        <dbReference type="Rhea" id="RHEA-COMP:10375"/>
        <dbReference type="Rhea" id="RHEA-COMP:10376"/>
        <dbReference type="Rhea" id="RHEA-COMP:14737"/>
        <dbReference type="Rhea" id="RHEA-COMP:14739"/>
        <dbReference type="ChEBI" id="CHEBI:13193"/>
        <dbReference type="ChEBI" id="CHEBI:15378"/>
        <dbReference type="ChEBI" id="CHEBI:17319"/>
        <dbReference type="ChEBI" id="CHEBI:17499"/>
        <dbReference type="ChEBI" id="CHEBI:29917"/>
        <dbReference type="ChEBI" id="CHEBI:57844"/>
        <dbReference type="ChEBI" id="CHEBI:57856"/>
        <dbReference type="ChEBI" id="CHEBI:59789"/>
        <dbReference type="ChEBI" id="CHEBI:64428"/>
        <dbReference type="ChEBI" id="CHEBI:74415"/>
        <dbReference type="ChEBI" id="CHEBI:74417"/>
        <dbReference type="EC" id="2.8.4.3"/>
    </reaction>
</comment>
<comment type="cofactor">
    <cofactor evidence="1">
        <name>[4Fe-4S] cluster</name>
        <dbReference type="ChEBI" id="CHEBI:49883"/>
    </cofactor>
    <text evidence="1">Binds 2 [4Fe-4S] clusters. One cluster is coordinated with 3 cysteines and an exchangeable S-adenosyl-L-methionine.</text>
</comment>
<comment type="subunit">
    <text evidence="1">Monomer.</text>
</comment>
<comment type="subcellular location">
    <subcellularLocation>
        <location evidence="1">Cytoplasm</location>
    </subcellularLocation>
</comment>
<comment type="similarity">
    <text evidence="1">Belongs to the methylthiotransferase family. MiaB subfamily.</text>
</comment>
<protein>
    <recommendedName>
        <fullName evidence="1">tRNA-2-methylthio-N(6)-dimethylallyladenosine synthase</fullName>
        <ecNumber evidence="1">2.8.4.3</ecNumber>
    </recommendedName>
    <alternativeName>
        <fullName evidence="1">(Dimethylallyl)adenosine tRNA methylthiotransferase MiaB</fullName>
    </alternativeName>
    <alternativeName>
        <fullName evidence="1">tRNA-i(6)A37 methylthiotransferase</fullName>
    </alternativeName>
</protein>
<gene>
    <name evidence="1" type="primary">miaB</name>
    <name type="ordered locus">Krad_1499</name>
</gene>
<feature type="chain" id="PRO_0000374348" description="tRNA-2-methylthio-N(6)-dimethylallyladenosine synthase">
    <location>
        <begin position="1"/>
        <end position="510"/>
    </location>
</feature>
<feature type="domain" description="MTTase N-terminal" evidence="1">
    <location>
        <begin position="19"/>
        <end position="144"/>
    </location>
</feature>
<feature type="domain" description="Radical SAM core" evidence="2">
    <location>
        <begin position="167"/>
        <end position="397"/>
    </location>
</feature>
<feature type="domain" description="TRAM" evidence="1">
    <location>
        <begin position="400"/>
        <end position="470"/>
    </location>
</feature>
<feature type="region of interest" description="Disordered" evidence="3">
    <location>
        <begin position="482"/>
        <end position="510"/>
    </location>
</feature>
<feature type="compositionally biased region" description="Basic and acidic residues" evidence="3">
    <location>
        <begin position="482"/>
        <end position="492"/>
    </location>
</feature>
<feature type="binding site" evidence="1">
    <location>
        <position position="28"/>
    </location>
    <ligand>
        <name>[4Fe-4S] cluster</name>
        <dbReference type="ChEBI" id="CHEBI:49883"/>
        <label>1</label>
    </ligand>
</feature>
<feature type="binding site" evidence="1">
    <location>
        <position position="73"/>
    </location>
    <ligand>
        <name>[4Fe-4S] cluster</name>
        <dbReference type="ChEBI" id="CHEBI:49883"/>
        <label>1</label>
    </ligand>
</feature>
<feature type="binding site" evidence="1">
    <location>
        <position position="107"/>
    </location>
    <ligand>
        <name>[4Fe-4S] cluster</name>
        <dbReference type="ChEBI" id="CHEBI:49883"/>
        <label>1</label>
    </ligand>
</feature>
<feature type="binding site" evidence="1">
    <location>
        <position position="181"/>
    </location>
    <ligand>
        <name>[4Fe-4S] cluster</name>
        <dbReference type="ChEBI" id="CHEBI:49883"/>
        <label>2</label>
        <note>4Fe-4S-S-AdoMet</note>
    </ligand>
</feature>
<feature type="binding site" evidence="1">
    <location>
        <position position="185"/>
    </location>
    <ligand>
        <name>[4Fe-4S] cluster</name>
        <dbReference type="ChEBI" id="CHEBI:49883"/>
        <label>2</label>
        <note>4Fe-4S-S-AdoMet</note>
    </ligand>
</feature>
<feature type="binding site" evidence="1">
    <location>
        <position position="188"/>
    </location>
    <ligand>
        <name>[4Fe-4S] cluster</name>
        <dbReference type="ChEBI" id="CHEBI:49883"/>
        <label>2</label>
        <note>4Fe-4S-S-AdoMet</note>
    </ligand>
</feature>
<keyword id="KW-0004">4Fe-4S</keyword>
<keyword id="KW-0963">Cytoplasm</keyword>
<keyword id="KW-0408">Iron</keyword>
<keyword id="KW-0411">Iron-sulfur</keyword>
<keyword id="KW-0479">Metal-binding</keyword>
<keyword id="KW-1185">Reference proteome</keyword>
<keyword id="KW-0949">S-adenosyl-L-methionine</keyword>
<keyword id="KW-0808">Transferase</keyword>
<keyword id="KW-0819">tRNA processing</keyword>
<organism>
    <name type="scientific">Kineococcus radiotolerans (strain ATCC BAA-149 / DSM 14245 / SRS30216)</name>
    <dbReference type="NCBI Taxonomy" id="266940"/>
    <lineage>
        <taxon>Bacteria</taxon>
        <taxon>Bacillati</taxon>
        <taxon>Actinomycetota</taxon>
        <taxon>Actinomycetes</taxon>
        <taxon>Kineosporiales</taxon>
        <taxon>Kineosporiaceae</taxon>
        <taxon>Kineococcus</taxon>
    </lineage>
</organism>
<reference key="1">
    <citation type="journal article" date="2008" name="PLoS ONE">
        <title>Survival in nuclear waste, extreme resistance, and potential applications gleaned from the genome sequence of Kineococcus radiotolerans SRS30216.</title>
        <authorList>
            <person name="Bagwell C.E."/>
            <person name="Bhat S."/>
            <person name="Hawkins G.M."/>
            <person name="Smith B.W."/>
            <person name="Biswas T."/>
            <person name="Hoover T.R."/>
            <person name="Saunders E."/>
            <person name="Han C.S."/>
            <person name="Tsodikov O.V."/>
            <person name="Shimkets L.J."/>
        </authorList>
    </citation>
    <scope>NUCLEOTIDE SEQUENCE [LARGE SCALE GENOMIC DNA]</scope>
    <source>
        <strain>ATCC BAA-149 / DSM 14245 / SRS30216</strain>
    </source>
</reference>
<evidence type="ECO:0000255" key="1">
    <source>
        <dbReference type="HAMAP-Rule" id="MF_01864"/>
    </source>
</evidence>
<evidence type="ECO:0000255" key="2">
    <source>
        <dbReference type="PROSITE-ProRule" id="PRU01266"/>
    </source>
</evidence>
<evidence type="ECO:0000256" key="3">
    <source>
        <dbReference type="SAM" id="MobiDB-lite"/>
    </source>
</evidence>
<proteinExistence type="inferred from homology"/>